<comment type="function">
    <text evidence="1">Is required not only for elongation of protein synthesis but also for the initiation of all mRNA translation through initiator tRNA(fMet) aminoacylation.</text>
</comment>
<comment type="catalytic activity">
    <reaction evidence="1">
        <text>tRNA(Met) + L-methionine + ATP = L-methionyl-tRNA(Met) + AMP + diphosphate</text>
        <dbReference type="Rhea" id="RHEA:13481"/>
        <dbReference type="Rhea" id="RHEA-COMP:9667"/>
        <dbReference type="Rhea" id="RHEA-COMP:9698"/>
        <dbReference type="ChEBI" id="CHEBI:30616"/>
        <dbReference type="ChEBI" id="CHEBI:33019"/>
        <dbReference type="ChEBI" id="CHEBI:57844"/>
        <dbReference type="ChEBI" id="CHEBI:78442"/>
        <dbReference type="ChEBI" id="CHEBI:78530"/>
        <dbReference type="ChEBI" id="CHEBI:456215"/>
        <dbReference type="EC" id="6.1.1.10"/>
    </reaction>
</comment>
<comment type="cofactor">
    <cofactor evidence="1">
        <name>Zn(2+)</name>
        <dbReference type="ChEBI" id="CHEBI:29105"/>
    </cofactor>
    <text evidence="1">Binds 1 zinc ion per subunit.</text>
</comment>
<comment type="subunit">
    <text evidence="1">Homodimer.</text>
</comment>
<comment type="subcellular location">
    <subcellularLocation>
        <location evidence="1">Cytoplasm</location>
    </subcellularLocation>
</comment>
<comment type="similarity">
    <text evidence="1">Belongs to the class-I aminoacyl-tRNA synthetase family. MetG type 1 subfamily.</text>
</comment>
<sequence>MTRTALVTTALPYANGPLHLGHLVGYIQADIWVRARRLRGDKTWFVCADDTHGTPIMLAAEKAGVTPEAFIASIQASHERDFAAFGVTFDHYDSTNSPVNRELTEAFYTKLEAAGHISRRSVAQFYDPAKGMFLPDRYIKGICPNCGSADQYGDNCEVCGATYAPTELKEPRSVISGATPELRDSEHFFFEVGQFDGFLHEWLAGDVALPGVKAKLKEWLDAEGGLRAWDISRDAPYFGFQMPGQPGKYFYVWLDAPIGYLCSFKTLCAQMGEDFAAHLVDGTQTELHHFIGKDIVNFHGLFWPAVLHGTGHRAPTRLHVNGYLTVDGAKMSKSRGTFVMARTFLDVGLEPEALRYYFAAKSSGGVDDLDLNLGDFIARVNADLVGKFVNLASRCAGFIGKRFDGKLAEALPDAAQYDRFVAALAPIREAYERNDAASAIRQTMALADEANKYIDDTKPWVIAKQDSADAQLQSVCTQGLNLFRVLVAALKPILPRTCAEAEAFLSAPMTSWEDVIRPLTSHTIQPYTALFTRIDPKLIDAMTDASKDTLAAPAAPATTSKAAPAKPDTKPAAAANPQSPISNPSFIGMDDFAKLDLRIGKVLVCECVEGSDKLLRFELDAGELGKRQIFSGIRASYGEPEALVGRSVVFIANLAPRKMRFGISDGMILSAGFDGGALALLDADSGAQPGMPVR</sequence>
<gene>
    <name evidence="1" type="primary">metG</name>
    <name type="ordered locus">XOO1924</name>
</gene>
<protein>
    <recommendedName>
        <fullName evidence="1">Methionine--tRNA ligase</fullName>
        <ecNumber evidence="1">6.1.1.10</ecNumber>
    </recommendedName>
    <alternativeName>
        <fullName evidence="1">Methionyl-tRNA synthetase</fullName>
        <shortName evidence="1">MetRS</shortName>
    </alternativeName>
</protein>
<proteinExistence type="inferred from homology"/>
<reference key="1">
    <citation type="journal article" date="2005" name="Nucleic Acids Res.">
        <title>The genome sequence of Xanthomonas oryzae pathovar oryzae KACC10331, the bacterial blight pathogen of rice.</title>
        <authorList>
            <person name="Lee B.-M."/>
            <person name="Park Y.-J."/>
            <person name="Park D.-S."/>
            <person name="Kang H.-W."/>
            <person name="Kim J.-G."/>
            <person name="Song E.-S."/>
            <person name="Park I.-C."/>
            <person name="Yoon U.-H."/>
            <person name="Hahn J.-H."/>
            <person name="Koo B.-S."/>
            <person name="Lee G.-B."/>
            <person name="Kim H."/>
            <person name="Park H.-S."/>
            <person name="Yoon K.-O."/>
            <person name="Kim J.-H."/>
            <person name="Jung C.-H."/>
            <person name="Koh N.-H."/>
            <person name="Seo J.-S."/>
            <person name="Go S.-J."/>
        </authorList>
    </citation>
    <scope>NUCLEOTIDE SEQUENCE [LARGE SCALE GENOMIC DNA]</scope>
    <source>
        <strain>KACC10331 / KXO85</strain>
    </source>
</reference>
<name>SYM_XANOR</name>
<organism>
    <name type="scientific">Xanthomonas oryzae pv. oryzae (strain KACC10331 / KXO85)</name>
    <dbReference type="NCBI Taxonomy" id="291331"/>
    <lineage>
        <taxon>Bacteria</taxon>
        <taxon>Pseudomonadati</taxon>
        <taxon>Pseudomonadota</taxon>
        <taxon>Gammaproteobacteria</taxon>
        <taxon>Lysobacterales</taxon>
        <taxon>Lysobacteraceae</taxon>
        <taxon>Xanthomonas</taxon>
    </lineage>
</organism>
<dbReference type="EC" id="6.1.1.10" evidence="1"/>
<dbReference type="EMBL" id="AE013598">
    <property type="protein sequence ID" value="AAW75178.1"/>
    <property type="molecule type" value="Genomic_DNA"/>
</dbReference>
<dbReference type="SMR" id="Q5H1J3"/>
<dbReference type="STRING" id="291331.XOO1924"/>
<dbReference type="KEGG" id="xoo:XOO1924"/>
<dbReference type="HOGENOM" id="CLU_009710_7_0_6"/>
<dbReference type="Proteomes" id="UP000006735">
    <property type="component" value="Chromosome"/>
</dbReference>
<dbReference type="GO" id="GO:0005829">
    <property type="term" value="C:cytosol"/>
    <property type="evidence" value="ECO:0007669"/>
    <property type="project" value="TreeGrafter"/>
</dbReference>
<dbReference type="GO" id="GO:0005524">
    <property type="term" value="F:ATP binding"/>
    <property type="evidence" value="ECO:0007669"/>
    <property type="project" value="UniProtKB-UniRule"/>
</dbReference>
<dbReference type="GO" id="GO:0046872">
    <property type="term" value="F:metal ion binding"/>
    <property type="evidence" value="ECO:0007669"/>
    <property type="project" value="UniProtKB-KW"/>
</dbReference>
<dbReference type="GO" id="GO:0004825">
    <property type="term" value="F:methionine-tRNA ligase activity"/>
    <property type="evidence" value="ECO:0007669"/>
    <property type="project" value="UniProtKB-UniRule"/>
</dbReference>
<dbReference type="GO" id="GO:0000049">
    <property type="term" value="F:tRNA binding"/>
    <property type="evidence" value="ECO:0007669"/>
    <property type="project" value="UniProtKB-KW"/>
</dbReference>
<dbReference type="GO" id="GO:0006431">
    <property type="term" value="P:methionyl-tRNA aminoacylation"/>
    <property type="evidence" value="ECO:0007669"/>
    <property type="project" value="UniProtKB-UniRule"/>
</dbReference>
<dbReference type="CDD" id="cd07957">
    <property type="entry name" value="Anticodon_Ia_Met"/>
    <property type="match status" value="1"/>
</dbReference>
<dbReference type="CDD" id="cd00814">
    <property type="entry name" value="MetRS_core"/>
    <property type="match status" value="1"/>
</dbReference>
<dbReference type="CDD" id="cd02800">
    <property type="entry name" value="tRNA_bind_EcMetRS_like"/>
    <property type="match status" value="1"/>
</dbReference>
<dbReference type="FunFam" id="1.10.730.10:FF:000005">
    <property type="entry name" value="Methionine--tRNA ligase"/>
    <property type="match status" value="1"/>
</dbReference>
<dbReference type="FunFam" id="2.20.28.20:FF:000001">
    <property type="entry name" value="Methionine--tRNA ligase"/>
    <property type="match status" value="1"/>
</dbReference>
<dbReference type="FunFam" id="2.40.50.140:FF:000042">
    <property type="entry name" value="Methionine--tRNA ligase"/>
    <property type="match status" value="1"/>
</dbReference>
<dbReference type="Gene3D" id="3.40.50.620">
    <property type="entry name" value="HUPs"/>
    <property type="match status" value="1"/>
</dbReference>
<dbReference type="Gene3D" id="1.10.730.10">
    <property type="entry name" value="Isoleucyl-tRNA Synthetase, Domain 1"/>
    <property type="match status" value="1"/>
</dbReference>
<dbReference type="Gene3D" id="2.20.28.20">
    <property type="entry name" value="Methionyl-tRNA synthetase, Zn-domain"/>
    <property type="match status" value="1"/>
</dbReference>
<dbReference type="Gene3D" id="2.40.50.140">
    <property type="entry name" value="Nucleic acid-binding proteins"/>
    <property type="match status" value="1"/>
</dbReference>
<dbReference type="HAMAP" id="MF_00098">
    <property type="entry name" value="Met_tRNA_synth_type1"/>
    <property type="match status" value="1"/>
</dbReference>
<dbReference type="InterPro" id="IPR001412">
    <property type="entry name" value="aa-tRNA-synth_I_CS"/>
</dbReference>
<dbReference type="InterPro" id="IPR041872">
    <property type="entry name" value="Anticodon_Met"/>
</dbReference>
<dbReference type="InterPro" id="IPR004495">
    <property type="entry name" value="Met-tRNA-synth_bsu_C"/>
</dbReference>
<dbReference type="InterPro" id="IPR023458">
    <property type="entry name" value="Met-tRNA_ligase_1"/>
</dbReference>
<dbReference type="InterPro" id="IPR014758">
    <property type="entry name" value="Met-tRNA_synth"/>
</dbReference>
<dbReference type="InterPro" id="IPR015413">
    <property type="entry name" value="Methionyl/Leucyl_tRNA_Synth"/>
</dbReference>
<dbReference type="InterPro" id="IPR033911">
    <property type="entry name" value="MetRS_core"/>
</dbReference>
<dbReference type="InterPro" id="IPR029038">
    <property type="entry name" value="MetRS_Zn"/>
</dbReference>
<dbReference type="InterPro" id="IPR012340">
    <property type="entry name" value="NA-bd_OB-fold"/>
</dbReference>
<dbReference type="InterPro" id="IPR014729">
    <property type="entry name" value="Rossmann-like_a/b/a_fold"/>
</dbReference>
<dbReference type="InterPro" id="IPR002547">
    <property type="entry name" value="tRNA-bd_dom"/>
</dbReference>
<dbReference type="InterPro" id="IPR009080">
    <property type="entry name" value="tRNAsynth_Ia_anticodon-bd"/>
</dbReference>
<dbReference type="NCBIfam" id="TIGR00398">
    <property type="entry name" value="metG"/>
    <property type="match status" value="1"/>
</dbReference>
<dbReference type="NCBIfam" id="TIGR00399">
    <property type="entry name" value="metG_C_term"/>
    <property type="match status" value="1"/>
</dbReference>
<dbReference type="NCBIfam" id="NF001100">
    <property type="entry name" value="PRK00133.1"/>
    <property type="match status" value="1"/>
</dbReference>
<dbReference type="PANTHER" id="PTHR45765">
    <property type="entry name" value="METHIONINE--TRNA LIGASE"/>
    <property type="match status" value="1"/>
</dbReference>
<dbReference type="PANTHER" id="PTHR45765:SF1">
    <property type="entry name" value="METHIONINE--TRNA LIGASE, CYTOPLASMIC"/>
    <property type="match status" value="1"/>
</dbReference>
<dbReference type="Pfam" id="PF19303">
    <property type="entry name" value="Anticodon_3"/>
    <property type="match status" value="1"/>
</dbReference>
<dbReference type="Pfam" id="PF09334">
    <property type="entry name" value="tRNA-synt_1g"/>
    <property type="match status" value="1"/>
</dbReference>
<dbReference type="Pfam" id="PF01588">
    <property type="entry name" value="tRNA_bind"/>
    <property type="match status" value="1"/>
</dbReference>
<dbReference type="PRINTS" id="PR01041">
    <property type="entry name" value="TRNASYNTHMET"/>
</dbReference>
<dbReference type="SUPFAM" id="SSF47323">
    <property type="entry name" value="Anticodon-binding domain of a subclass of class I aminoacyl-tRNA synthetases"/>
    <property type="match status" value="1"/>
</dbReference>
<dbReference type="SUPFAM" id="SSF57770">
    <property type="entry name" value="Methionyl-tRNA synthetase (MetRS), Zn-domain"/>
    <property type="match status" value="1"/>
</dbReference>
<dbReference type="SUPFAM" id="SSF50249">
    <property type="entry name" value="Nucleic acid-binding proteins"/>
    <property type="match status" value="1"/>
</dbReference>
<dbReference type="SUPFAM" id="SSF52374">
    <property type="entry name" value="Nucleotidylyl transferase"/>
    <property type="match status" value="1"/>
</dbReference>
<dbReference type="PROSITE" id="PS00178">
    <property type="entry name" value="AA_TRNA_LIGASE_I"/>
    <property type="match status" value="1"/>
</dbReference>
<dbReference type="PROSITE" id="PS50886">
    <property type="entry name" value="TRBD"/>
    <property type="match status" value="1"/>
</dbReference>
<evidence type="ECO:0000255" key="1">
    <source>
        <dbReference type="HAMAP-Rule" id="MF_00098"/>
    </source>
</evidence>
<evidence type="ECO:0000256" key="2">
    <source>
        <dbReference type="SAM" id="MobiDB-lite"/>
    </source>
</evidence>
<keyword id="KW-0030">Aminoacyl-tRNA synthetase</keyword>
<keyword id="KW-0067">ATP-binding</keyword>
<keyword id="KW-0963">Cytoplasm</keyword>
<keyword id="KW-0436">Ligase</keyword>
<keyword id="KW-0479">Metal-binding</keyword>
<keyword id="KW-0547">Nucleotide-binding</keyword>
<keyword id="KW-0648">Protein biosynthesis</keyword>
<keyword id="KW-1185">Reference proteome</keyword>
<keyword id="KW-0694">RNA-binding</keyword>
<keyword id="KW-0820">tRNA-binding</keyword>
<keyword id="KW-0862">Zinc</keyword>
<accession>Q5H1J3</accession>
<feature type="chain" id="PRO_0000139177" description="Methionine--tRNA ligase">
    <location>
        <begin position="1"/>
        <end position="694"/>
    </location>
</feature>
<feature type="domain" description="tRNA-binding" evidence="1">
    <location>
        <begin position="591"/>
        <end position="694"/>
    </location>
</feature>
<feature type="region of interest" description="Disordered" evidence="2">
    <location>
        <begin position="550"/>
        <end position="580"/>
    </location>
</feature>
<feature type="short sequence motif" description="'HIGH' region">
    <location>
        <begin position="12"/>
        <end position="22"/>
    </location>
</feature>
<feature type="short sequence motif" description="'KMSKS' region">
    <location>
        <begin position="330"/>
        <end position="334"/>
    </location>
</feature>
<feature type="compositionally biased region" description="Low complexity" evidence="2">
    <location>
        <begin position="550"/>
        <end position="575"/>
    </location>
</feature>
<feature type="binding site" evidence="1">
    <location>
        <position position="143"/>
    </location>
    <ligand>
        <name>Zn(2+)</name>
        <dbReference type="ChEBI" id="CHEBI:29105"/>
    </ligand>
</feature>
<feature type="binding site" evidence="1">
    <location>
        <position position="146"/>
    </location>
    <ligand>
        <name>Zn(2+)</name>
        <dbReference type="ChEBI" id="CHEBI:29105"/>
    </ligand>
</feature>
<feature type="binding site" evidence="1">
    <location>
        <position position="156"/>
    </location>
    <ligand>
        <name>Zn(2+)</name>
        <dbReference type="ChEBI" id="CHEBI:29105"/>
    </ligand>
</feature>
<feature type="binding site" evidence="1">
    <location>
        <position position="159"/>
    </location>
    <ligand>
        <name>Zn(2+)</name>
        <dbReference type="ChEBI" id="CHEBI:29105"/>
    </ligand>
</feature>
<feature type="binding site" evidence="1">
    <location>
        <position position="333"/>
    </location>
    <ligand>
        <name>ATP</name>
        <dbReference type="ChEBI" id="CHEBI:30616"/>
    </ligand>
</feature>